<gene>
    <name evidence="1" type="primary">nuoI1</name>
    <name type="ordered locus">GSU0346</name>
</gene>
<evidence type="ECO:0000255" key="1">
    <source>
        <dbReference type="HAMAP-Rule" id="MF_01351"/>
    </source>
</evidence>
<reference key="1">
    <citation type="journal article" date="2003" name="Science">
        <title>Genome of Geobacter sulfurreducens: metal reduction in subsurface environments.</title>
        <authorList>
            <person name="Methe B.A."/>
            <person name="Nelson K.E."/>
            <person name="Eisen J.A."/>
            <person name="Paulsen I.T."/>
            <person name="Nelson W.C."/>
            <person name="Heidelberg J.F."/>
            <person name="Wu D."/>
            <person name="Wu M."/>
            <person name="Ward N.L."/>
            <person name="Beanan M.J."/>
            <person name="Dodson R.J."/>
            <person name="Madupu R."/>
            <person name="Brinkac L.M."/>
            <person name="Daugherty S.C."/>
            <person name="DeBoy R.T."/>
            <person name="Durkin A.S."/>
            <person name="Gwinn M.L."/>
            <person name="Kolonay J.F."/>
            <person name="Sullivan S.A."/>
            <person name="Haft D.H."/>
            <person name="Selengut J."/>
            <person name="Davidsen T.M."/>
            <person name="Zafar N."/>
            <person name="White O."/>
            <person name="Tran B."/>
            <person name="Romero C."/>
            <person name="Forberger H.A."/>
            <person name="Weidman J.F."/>
            <person name="Khouri H.M."/>
            <person name="Feldblyum T.V."/>
            <person name="Utterback T.R."/>
            <person name="Van Aken S.E."/>
            <person name="Lovley D.R."/>
            <person name="Fraser C.M."/>
        </authorList>
    </citation>
    <scope>NUCLEOTIDE SEQUENCE [LARGE SCALE GENOMIC DNA]</scope>
    <source>
        <strain>ATCC 51573 / DSM 12127 / PCA</strain>
    </source>
</reference>
<proteinExistence type="inferred from homology"/>
<sequence length="132" mass="15138">MIMPLINGLKITLKHMFMKPVTLQYPDERPTPSPNFRGLHALKVSHDKAKCVACYLCPTVCPAKCITVEAGEDATHDKYAERYEIDMLRCIFCGYCVEACPVDALKMTGQFELANYKREDFIFVKERLLEKK</sequence>
<organism>
    <name type="scientific">Geobacter sulfurreducens (strain ATCC 51573 / DSM 12127 / PCA)</name>
    <dbReference type="NCBI Taxonomy" id="243231"/>
    <lineage>
        <taxon>Bacteria</taxon>
        <taxon>Pseudomonadati</taxon>
        <taxon>Thermodesulfobacteriota</taxon>
        <taxon>Desulfuromonadia</taxon>
        <taxon>Geobacterales</taxon>
        <taxon>Geobacteraceae</taxon>
        <taxon>Geobacter</taxon>
    </lineage>
</organism>
<name>NUOI1_GEOSL</name>
<dbReference type="EC" id="7.1.1.-" evidence="1"/>
<dbReference type="EMBL" id="AE017180">
    <property type="protein sequence ID" value="AAR33679.1"/>
    <property type="molecule type" value="Genomic_DNA"/>
</dbReference>
<dbReference type="RefSeq" id="NP_951406.1">
    <property type="nucleotide sequence ID" value="NC_002939.5"/>
</dbReference>
<dbReference type="SMR" id="Q74GA0"/>
<dbReference type="STRING" id="243231.GSU0346"/>
<dbReference type="EnsemblBacteria" id="AAR33679">
    <property type="protein sequence ID" value="AAR33679"/>
    <property type="gene ID" value="GSU0346"/>
</dbReference>
<dbReference type="KEGG" id="gsu:GSU0346"/>
<dbReference type="PATRIC" id="fig|243231.5.peg.343"/>
<dbReference type="eggNOG" id="COG1143">
    <property type="taxonomic scope" value="Bacteria"/>
</dbReference>
<dbReference type="HOGENOM" id="CLU_067218_5_1_7"/>
<dbReference type="InParanoid" id="Q74GA0"/>
<dbReference type="OrthoDB" id="9808559at2"/>
<dbReference type="Proteomes" id="UP000000577">
    <property type="component" value="Chromosome"/>
</dbReference>
<dbReference type="GO" id="GO:0005886">
    <property type="term" value="C:plasma membrane"/>
    <property type="evidence" value="ECO:0007669"/>
    <property type="project" value="UniProtKB-SubCell"/>
</dbReference>
<dbReference type="GO" id="GO:0051539">
    <property type="term" value="F:4 iron, 4 sulfur cluster binding"/>
    <property type="evidence" value="ECO:0007669"/>
    <property type="project" value="UniProtKB-KW"/>
</dbReference>
<dbReference type="GO" id="GO:0005506">
    <property type="term" value="F:iron ion binding"/>
    <property type="evidence" value="ECO:0007669"/>
    <property type="project" value="UniProtKB-UniRule"/>
</dbReference>
<dbReference type="GO" id="GO:0050136">
    <property type="term" value="F:NADH:ubiquinone reductase (non-electrogenic) activity"/>
    <property type="evidence" value="ECO:0007669"/>
    <property type="project" value="UniProtKB-UniRule"/>
</dbReference>
<dbReference type="GO" id="GO:0048038">
    <property type="term" value="F:quinone binding"/>
    <property type="evidence" value="ECO:0007669"/>
    <property type="project" value="UniProtKB-KW"/>
</dbReference>
<dbReference type="FunFam" id="3.30.70.3270:FF:000015">
    <property type="entry name" value="NADH-quinone oxidoreductase subunit I 1"/>
    <property type="match status" value="1"/>
</dbReference>
<dbReference type="Gene3D" id="3.30.70.3270">
    <property type="match status" value="1"/>
</dbReference>
<dbReference type="HAMAP" id="MF_01351">
    <property type="entry name" value="NDH1_NuoI"/>
    <property type="match status" value="1"/>
</dbReference>
<dbReference type="InterPro" id="IPR017896">
    <property type="entry name" value="4Fe4S_Fe-S-bd"/>
</dbReference>
<dbReference type="InterPro" id="IPR017900">
    <property type="entry name" value="4Fe4S_Fe_S_CS"/>
</dbReference>
<dbReference type="InterPro" id="IPR010226">
    <property type="entry name" value="NADH_quinone_OxRdtase_chainI"/>
</dbReference>
<dbReference type="NCBIfam" id="TIGR01971">
    <property type="entry name" value="NuoI"/>
    <property type="match status" value="1"/>
</dbReference>
<dbReference type="NCBIfam" id="NF004538">
    <property type="entry name" value="PRK05888.1-4"/>
    <property type="match status" value="1"/>
</dbReference>
<dbReference type="PANTHER" id="PTHR10849">
    <property type="entry name" value="NADH DEHYDROGENASE UBIQUINONE IRON-SULFUR PROTEIN 8, MITOCHONDRIAL"/>
    <property type="match status" value="1"/>
</dbReference>
<dbReference type="PANTHER" id="PTHR10849:SF24">
    <property type="entry name" value="NADH-QUINONE OXIDOREDUCTASE SUBUNIT I 2"/>
    <property type="match status" value="1"/>
</dbReference>
<dbReference type="Pfam" id="PF00037">
    <property type="entry name" value="Fer4"/>
    <property type="match status" value="1"/>
</dbReference>
<dbReference type="SUPFAM" id="SSF54862">
    <property type="entry name" value="4Fe-4S ferredoxins"/>
    <property type="match status" value="1"/>
</dbReference>
<dbReference type="PROSITE" id="PS00198">
    <property type="entry name" value="4FE4S_FER_1"/>
    <property type="match status" value="1"/>
</dbReference>
<dbReference type="PROSITE" id="PS51379">
    <property type="entry name" value="4FE4S_FER_2"/>
    <property type="match status" value="2"/>
</dbReference>
<feature type="chain" id="PRO_0000245709" description="NADH-quinone oxidoreductase subunit I 1">
    <location>
        <begin position="1"/>
        <end position="132"/>
    </location>
</feature>
<feature type="domain" description="4Fe-4S ferredoxin-type 1" evidence="1">
    <location>
        <begin position="42"/>
        <end position="71"/>
    </location>
</feature>
<feature type="domain" description="4Fe-4S ferredoxin-type 2" evidence="1">
    <location>
        <begin position="81"/>
        <end position="110"/>
    </location>
</feature>
<feature type="binding site" evidence="1">
    <location>
        <position position="51"/>
    </location>
    <ligand>
        <name>[4Fe-4S] cluster</name>
        <dbReference type="ChEBI" id="CHEBI:49883"/>
        <label>1</label>
    </ligand>
</feature>
<feature type="binding site" evidence="1">
    <location>
        <position position="54"/>
    </location>
    <ligand>
        <name>[4Fe-4S] cluster</name>
        <dbReference type="ChEBI" id="CHEBI:49883"/>
        <label>1</label>
    </ligand>
</feature>
<feature type="binding site" evidence="1">
    <location>
        <position position="57"/>
    </location>
    <ligand>
        <name>[4Fe-4S] cluster</name>
        <dbReference type="ChEBI" id="CHEBI:49883"/>
        <label>1</label>
    </ligand>
</feature>
<feature type="binding site" evidence="1">
    <location>
        <position position="61"/>
    </location>
    <ligand>
        <name>[4Fe-4S] cluster</name>
        <dbReference type="ChEBI" id="CHEBI:49883"/>
        <label>2</label>
    </ligand>
</feature>
<feature type="binding site" evidence="1">
    <location>
        <position position="90"/>
    </location>
    <ligand>
        <name>[4Fe-4S] cluster</name>
        <dbReference type="ChEBI" id="CHEBI:49883"/>
        <label>2</label>
    </ligand>
</feature>
<feature type="binding site" evidence="1">
    <location>
        <position position="93"/>
    </location>
    <ligand>
        <name>[4Fe-4S] cluster</name>
        <dbReference type="ChEBI" id="CHEBI:49883"/>
        <label>2</label>
    </ligand>
</feature>
<feature type="binding site" evidence="1">
    <location>
        <position position="96"/>
    </location>
    <ligand>
        <name>[4Fe-4S] cluster</name>
        <dbReference type="ChEBI" id="CHEBI:49883"/>
        <label>2</label>
    </ligand>
</feature>
<feature type="binding site" evidence="1">
    <location>
        <position position="100"/>
    </location>
    <ligand>
        <name>[4Fe-4S] cluster</name>
        <dbReference type="ChEBI" id="CHEBI:49883"/>
        <label>1</label>
    </ligand>
</feature>
<comment type="function">
    <text evidence="1">NDH-1 shuttles electrons from NADH, via FMN and iron-sulfur (Fe-S) centers, to quinones in the respiratory chain. The immediate electron acceptor for the enzyme in this species is believed to be ubiquinone. Couples the redox reaction to proton translocation (for every two electrons transferred, four hydrogen ions are translocated across the cytoplasmic membrane), and thus conserves the redox energy in a proton gradient.</text>
</comment>
<comment type="catalytic activity">
    <reaction evidence="1">
        <text>a quinone + NADH + 5 H(+)(in) = a quinol + NAD(+) + 4 H(+)(out)</text>
        <dbReference type="Rhea" id="RHEA:57888"/>
        <dbReference type="ChEBI" id="CHEBI:15378"/>
        <dbReference type="ChEBI" id="CHEBI:24646"/>
        <dbReference type="ChEBI" id="CHEBI:57540"/>
        <dbReference type="ChEBI" id="CHEBI:57945"/>
        <dbReference type="ChEBI" id="CHEBI:132124"/>
    </reaction>
</comment>
<comment type="cofactor">
    <cofactor evidence="1">
        <name>[4Fe-4S] cluster</name>
        <dbReference type="ChEBI" id="CHEBI:49883"/>
    </cofactor>
    <text evidence="1">Binds 2 [4Fe-4S] clusters per subunit.</text>
</comment>
<comment type="subunit">
    <text evidence="1">NDH-1 is composed of 14 different subunits. Subunits NuoA, H, J, K, L, M, N constitute the membrane sector of the complex.</text>
</comment>
<comment type="subcellular location">
    <subcellularLocation>
        <location evidence="1">Cell inner membrane</location>
        <topology evidence="1">Peripheral membrane protein</topology>
    </subcellularLocation>
</comment>
<comment type="similarity">
    <text evidence="1">Belongs to the complex I 23 kDa subunit family.</text>
</comment>
<keyword id="KW-0004">4Fe-4S</keyword>
<keyword id="KW-0997">Cell inner membrane</keyword>
<keyword id="KW-1003">Cell membrane</keyword>
<keyword id="KW-0408">Iron</keyword>
<keyword id="KW-0411">Iron-sulfur</keyword>
<keyword id="KW-0472">Membrane</keyword>
<keyword id="KW-0479">Metal-binding</keyword>
<keyword id="KW-0520">NAD</keyword>
<keyword id="KW-0874">Quinone</keyword>
<keyword id="KW-1185">Reference proteome</keyword>
<keyword id="KW-0677">Repeat</keyword>
<keyword id="KW-1278">Translocase</keyword>
<keyword id="KW-0830">Ubiquinone</keyword>
<accession>Q74GA0</accession>
<protein>
    <recommendedName>
        <fullName evidence="1">NADH-quinone oxidoreductase subunit I 1</fullName>
        <ecNumber evidence="1">7.1.1.-</ecNumber>
    </recommendedName>
    <alternativeName>
        <fullName evidence="1">NADH dehydrogenase I subunit I 1</fullName>
    </alternativeName>
    <alternativeName>
        <fullName evidence="1">NDH-1 subunit I 1</fullName>
    </alternativeName>
</protein>